<name>RS15_RICTY</name>
<protein>
    <recommendedName>
        <fullName evidence="1">Small ribosomal subunit protein uS15</fullName>
    </recommendedName>
    <alternativeName>
        <fullName evidence="2">30S ribosomal protein S15</fullName>
    </alternativeName>
</protein>
<comment type="function">
    <text evidence="1">One of the primary rRNA binding proteins, it binds directly to 16S rRNA where it helps nucleate assembly of the platform of the 30S subunit by binding and bridging several RNA helices of the 16S rRNA.</text>
</comment>
<comment type="function">
    <text evidence="1">Forms an intersubunit bridge (bridge B4) with the 23S rRNA of the 50S subunit in the ribosome.</text>
</comment>
<comment type="subunit">
    <text evidence="1">Part of the 30S ribosomal subunit. Forms a bridge to the 50S subunit in the 70S ribosome, contacting the 23S rRNA.</text>
</comment>
<comment type="similarity">
    <text evidence="1">Belongs to the universal ribosomal protein uS15 family.</text>
</comment>
<sequence length="91" mass="10609">MSITTERKQQLIKEYAITENDTGSSAVQCAILTERINNLTEHFKSNHKDHTSRRGLLILVGRRRRLLNYIKKNNVSEYLDLITKLGIRKIK</sequence>
<evidence type="ECO:0000255" key="1">
    <source>
        <dbReference type="HAMAP-Rule" id="MF_01343"/>
    </source>
</evidence>
<evidence type="ECO:0000305" key="2"/>
<feature type="chain" id="PRO_0000115528" description="Small ribosomal subunit protein uS15">
    <location>
        <begin position="1"/>
        <end position="91"/>
    </location>
</feature>
<proteinExistence type="inferred from homology"/>
<keyword id="KW-0687">Ribonucleoprotein</keyword>
<keyword id="KW-0689">Ribosomal protein</keyword>
<keyword id="KW-0694">RNA-binding</keyword>
<keyword id="KW-0699">rRNA-binding</keyword>
<accession>Q68WN2</accession>
<gene>
    <name evidence="1" type="primary">rpsO</name>
    <name type="ordered locus">RT0488</name>
</gene>
<reference key="1">
    <citation type="journal article" date="2004" name="J. Bacteriol.">
        <title>Complete genome sequence of Rickettsia typhi and comparison with sequences of other Rickettsiae.</title>
        <authorList>
            <person name="McLeod M.P."/>
            <person name="Qin X."/>
            <person name="Karpathy S.E."/>
            <person name="Gioia J."/>
            <person name="Highlander S.K."/>
            <person name="Fox G.E."/>
            <person name="McNeill T.Z."/>
            <person name="Jiang H."/>
            <person name="Muzny D."/>
            <person name="Jacob L.S."/>
            <person name="Hawes A.C."/>
            <person name="Sodergren E."/>
            <person name="Gill R."/>
            <person name="Hume J."/>
            <person name="Morgan M."/>
            <person name="Fan G."/>
            <person name="Amin A.G."/>
            <person name="Gibbs R.A."/>
            <person name="Hong C."/>
            <person name="Yu X.-J."/>
            <person name="Walker D.H."/>
            <person name="Weinstock G.M."/>
        </authorList>
    </citation>
    <scope>NUCLEOTIDE SEQUENCE [LARGE SCALE GENOMIC DNA]</scope>
    <source>
        <strain>ATCC VR-144 / Wilmington</strain>
    </source>
</reference>
<dbReference type="EMBL" id="AE017197">
    <property type="protein sequence ID" value="AAU03960.1"/>
    <property type="molecule type" value="Genomic_DNA"/>
</dbReference>
<dbReference type="RefSeq" id="WP_011190942.1">
    <property type="nucleotide sequence ID" value="NC_006142.1"/>
</dbReference>
<dbReference type="SMR" id="Q68WN2"/>
<dbReference type="KEGG" id="rty:RT0488"/>
<dbReference type="eggNOG" id="COG0184">
    <property type="taxonomic scope" value="Bacteria"/>
</dbReference>
<dbReference type="HOGENOM" id="CLU_148518_0_0_5"/>
<dbReference type="OrthoDB" id="9799262at2"/>
<dbReference type="Proteomes" id="UP000000604">
    <property type="component" value="Chromosome"/>
</dbReference>
<dbReference type="GO" id="GO:0022627">
    <property type="term" value="C:cytosolic small ribosomal subunit"/>
    <property type="evidence" value="ECO:0007669"/>
    <property type="project" value="TreeGrafter"/>
</dbReference>
<dbReference type="GO" id="GO:0019843">
    <property type="term" value="F:rRNA binding"/>
    <property type="evidence" value="ECO:0007669"/>
    <property type="project" value="UniProtKB-UniRule"/>
</dbReference>
<dbReference type="GO" id="GO:0003735">
    <property type="term" value="F:structural constituent of ribosome"/>
    <property type="evidence" value="ECO:0007669"/>
    <property type="project" value="InterPro"/>
</dbReference>
<dbReference type="GO" id="GO:0006412">
    <property type="term" value="P:translation"/>
    <property type="evidence" value="ECO:0007669"/>
    <property type="project" value="UniProtKB-UniRule"/>
</dbReference>
<dbReference type="CDD" id="cd00353">
    <property type="entry name" value="Ribosomal_S15p_S13e"/>
    <property type="match status" value="1"/>
</dbReference>
<dbReference type="FunFam" id="1.10.287.10:FF:000002">
    <property type="entry name" value="30S ribosomal protein S15"/>
    <property type="match status" value="1"/>
</dbReference>
<dbReference type="Gene3D" id="6.10.250.3130">
    <property type="match status" value="1"/>
</dbReference>
<dbReference type="Gene3D" id="1.10.287.10">
    <property type="entry name" value="S15/NS1, RNA-binding"/>
    <property type="match status" value="1"/>
</dbReference>
<dbReference type="HAMAP" id="MF_01343_B">
    <property type="entry name" value="Ribosomal_uS15_B"/>
    <property type="match status" value="1"/>
</dbReference>
<dbReference type="InterPro" id="IPR000589">
    <property type="entry name" value="Ribosomal_uS15"/>
</dbReference>
<dbReference type="InterPro" id="IPR005290">
    <property type="entry name" value="Ribosomal_uS15_bac-type"/>
</dbReference>
<dbReference type="InterPro" id="IPR009068">
    <property type="entry name" value="uS15_NS1_RNA-bd_sf"/>
</dbReference>
<dbReference type="NCBIfam" id="TIGR00952">
    <property type="entry name" value="S15_bact"/>
    <property type="match status" value="1"/>
</dbReference>
<dbReference type="PANTHER" id="PTHR23321">
    <property type="entry name" value="RIBOSOMAL PROTEIN S15, BACTERIAL AND ORGANELLAR"/>
    <property type="match status" value="1"/>
</dbReference>
<dbReference type="PANTHER" id="PTHR23321:SF26">
    <property type="entry name" value="SMALL RIBOSOMAL SUBUNIT PROTEIN US15M"/>
    <property type="match status" value="1"/>
</dbReference>
<dbReference type="Pfam" id="PF00312">
    <property type="entry name" value="Ribosomal_S15"/>
    <property type="match status" value="1"/>
</dbReference>
<dbReference type="SMART" id="SM01387">
    <property type="entry name" value="Ribosomal_S15"/>
    <property type="match status" value="1"/>
</dbReference>
<dbReference type="SUPFAM" id="SSF47060">
    <property type="entry name" value="S15/NS1 RNA-binding domain"/>
    <property type="match status" value="1"/>
</dbReference>
<dbReference type="PROSITE" id="PS00362">
    <property type="entry name" value="RIBOSOMAL_S15"/>
    <property type="match status" value="1"/>
</dbReference>
<organism>
    <name type="scientific">Rickettsia typhi (strain ATCC VR-144 / Wilmington)</name>
    <dbReference type="NCBI Taxonomy" id="257363"/>
    <lineage>
        <taxon>Bacteria</taxon>
        <taxon>Pseudomonadati</taxon>
        <taxon>Pseudomonadota</taxon>
        <taxon>Alphaproteobacteria</taxon>
        <taxon>Rickettsiales</taxon>
        <taxon>Rickettsiaceae</taxon>
        <taxon>Rickettsieae</taxon>
        <taxon>Rickettsia</taxon>
        <taxon>typhus group</taxon>
    </lineage>
</organism>